<proteinExistence type="inferred from homology"/>
<feature type="chain" id="PRO_0000324199" description="Nuclear export protein">
    <location>
        <begin position="1"/>
        <end position="121"/>
    </location>
</feature>
<feature type="short sequence motif" description="Nuclear export signal" evidence="1">
    <location>
        <begin position="12"/>
        <end position="21"/>
    </location>
</feature>
<feature type="short sequence motif" description="Nuclear export signal" evidence="1">
    <location>
        <begin position="85"/>
        <end position="94"/>
    </location>
</feature>
<reference key="1">
    <citation type="journal article" date="1997" name="Virus Res.">
        <title>Evolution of H5 subtype avian influenza A viruses in North America.</title>
        <authorList>
            <person name="Garcia M."/>
            <person name="Suarez D.L."/>
            <person name="Crawford J.M."/>
            <person name="Latimer J.W."/>
            <person name="Slemons R.D."/>
            <person name="Swayne D.E."/>
            <person name="Purdue M.L."/>
        </authorList>
    </citation>
    <scope>NUCLEOTIDE SEQUENCE [GENOMIC RNA]</scope>
</reference>
<reference key="2">
    <citation type="journal article" date="2006" name="Science">
        <title>Large-scale sequence analysis of avian influenza isolates.</title>
        <authorList>
            <person name="Obenauer J.C."/>
            <person name="Denson J."/>
            <person name="Mehta P.K."/>
            <person name="Su X."/>
            <person name="Mukatira S."/>
            <person name="Finkelstein D.B."/>
            <person name="Xu X."/>
            <person name="Wang J."/>
            <person name="Ma J."/>
            <person name="Fan Y."/>
            <person name="Rakestraw K.M."/>
            <person name="Webster R.G."/>
            <person name="Hoffmann E."/>
            <person name="Krauss S."/>
            <person name="Zheng J."/>
            <person name="Zhang Z."/>
            <person name="Naeve C.W."/>
        </authorList>
    </citation>
    <scope>NUCLEOTIDE SEQUENCE [GENOMIC RNA]</scope>
</reference>
<organismHost>
    <name type="scientific">Aves</name>
    <dbReference type="NCBI Taxonomy" id="8782"/>
</organismHost>
<dbReference type="EMBL" id="U85376">
    <property type="protein sequence ID" value="AAC40652.1"/>
    <property type="molecule type" value="Genomic_RNA"/>
</dbReference>
<dbReference type="EMBL" id="CY015106">
    <property type="protein sequence ID" value="ABI85142.1"/>
    <property type="molecule type" value="Genomic_RNA"/>
</dbReference>
<dbReference type="SMR" id="O41648"/>
<dbReference type="GO" id="GO:0042025">
    <property type="term" value="C:host cell nucleus"/>
    <property type="evidence" value="ECO:0007669"/>
    <property type="project" value="UniProtKB-SubCell"/>
</dbReference>
<dbReference type="GO" id="GO:0044423">
    <property type="term" value="C:virion component"/>
    <property type="evidence" value="ECO:0007669"/>
    <property type="project" value="UniProtKB-UniRule"/>
</dbReference>
<dbReference type="GO" id="GO:0039675">
    <property type="term" value="P:exit of virus from host cell nucleus through nuclear pore"/>
    <property type="evidence" value="ECO:0007669"/>
    <property type="project" value="UniProtKB-UniRule"/>
</dbReference>
<dbReference type="Gene3D" id="1.10.287.230">
    <property type="match status" value="1"/>
</dbReference>
<dbReference type="Gene3D" id="1.10.287.10">
    <property type="entry name" value="S15/NS1, RNA-binding"/>
    <property type="match status" value="1"/>
</dbReference>
<dbReference type="HAMAP" id="MF_04067">
    <property type="entry name" value="INFV_NEP"/>
    <property type="match status" value="1"/>
</dbReference>
<dbReference type="InterPro" id="IPR000968">
    <property type="entry name" value="Flu_NS2"/>
</dbReference>
<dbReference type="Pfam" id="PF00601">
    <property type="entry name" value="Flu_NS2"/>
    <property type="match status" value="1"/>
</dbReference>
<dbReference type="SUPFAM" id="SSF101156">
    <property type="entry name" value="Nonstructural protein ns2, Nep, M1-binding domain"/>
    <property type="match status" value="1"/>
</dbReference>
<evidence type="ECO:0000255" key="1">
    <source>
        <dbReference type="HAMAP-Rule" id="MF_04067"/>
    </source>
</evidence>
<accession>O41648</accession>
<protein>
    <recommendedName>
        <fullName evidence="1">Nuclear export protein</fullName>
        <shortName evidence="1">NEP</shortName>
    </recommendedName>
    <alternativeName>
        <fullName evidence="1">Non-structural protein 2</fullName>
        <shortName evidence="1">NS2</shortName>
    </alternativeName>
</protein>
<sequence>MDSNTVSSFQDILMRMSKMQLGASSEDLNGMITQFESLKLYRDSLGEAVMRMGDLHSLQNRNGKWREQLSQKFEEIRWLIEEVRHRLKITENSFEQITFMQALQLLLEVEQEIRTFSFQLI</sequence>
<organism>
    <name type="scientific">Influenza A virus (strain A/Turkey/Ontario/7732/1966 H5N9)</name>
    <dbReference type="NCBI Taxonomy" id="380301"/>
    <lineage>
        <taxon>Viruses</taxon>
        <taxon>Riboviria</taxon>
        <taxon>Orthornavirae</taxon>
        <taxon>Negarnaviricota</taxon>
        <taxon>Polyploviricotina</taxon>
        <taxon>Insthoviricetes</taxon>
        <taxon>Articulavirales</taxon>
        <taxon>Orthomyxoviridae</taxon>
        <taxon>Alphainfluenzavirus</taxon>
        <taxon>Alphainfluenzavirus influenzae</taxon>
        <taxon>Influenza A virus</taxon>
    </lineage>
</organism>
<comment type="function">
    <text evidence="1">Mediates the nuclear export of encapsidated genomic RNAs (ribonucleoproteins, RNPs). Acts as an adapter between viral RNPs complexes and the nuclear export machinery of the cell. Possesses no intrinsic RNA-binding activity, but includes a C-terminal M1-binding domain. This domain is believed to allow recognition of RNPs bound to the protein M1. Since protein M1 is not available in large quantities before late stages of infection, such an indirect recognition mechanism probably ensures that genomic RNPs are not exported from the host nucleus until sufficient quantities of viral mRNA and progeny genomic RNA have been synthesized. Furthermore, the RNPs enter the host cytoplasm only when associated with the M1 protein that is necessary to guide them to the plasma membrane. May down-regulate viral RNA synthesis when overproduced.</text>
</comment>
<comment type="subunit">
    <text evidence="1">Interacts with protein M1. May interact with host nucleoporin RAB/HRB and exportin XPO1/CRM1.</text>
</comment>
<comment type="subcellular location">
    <subcellularLocation>
        <location evidence="1">Virion</location>
    </subcellularLocation>
    <subcellularLocation>
        <location evidence="1">Host nucleus</location>
    </subcellularLocation>
</comment>
<comment type="alternative products">
    <event type="alternative splicing"/>
    <isoform>
        <id>O41648-1</id>
        <name>NEP</name>
        <name>NS2</name>
        <sequence type="displayed"/>
    </isoform>
    <isoform>
        <id>O41647-1</id>
        <name>NS1</name>
        <sequence type="external"/>
    </isoform>
</comment>
<comment type="similarity">
    <text evidence="1">Belongs to the influenza viruses NEP family.</text>
</comment>
<name>NEP_I66A0</name>
<gene>
    <name evidence="1" type="primary">NS</name>
</gene>
<keyword id="KW-0025">Alternative splicing</keyword>
<keyword id="KW-1048">Host nucleus</keyword>
<keyword id="KW-0945">Host-virus interaction</keyword>
<keyword id="KW-0813">Transport</keyword>
<keyword id="KW-0946">Virion</keyword>